<accession>Q46VY1</accession>
<keyword id="KW-0066">ATP synthesis</keyword>
<keyword id="KW-0997">Cell inner membrane</keyword>
<keyword id="KW-1003">Cell membrane</keyword>
<keyword id="KW-0139">CF(1)</keyword>
<keyword id="KW-0375">Hydrogen ion transport</keyword>
<keyword id="KW-0406">Ion transport</keyword>
<keyword id="KW-0472">Membrane</keyword>
<keyword id="KW-0813">Transport</keyword>
<protein>
    <recommendedName>
        <fullName evidence="1">ATP synthase epsilon chain</fullName>
    </recommendedName>
    <alternativeName>
        <fullName evidence="1">ATP synthase F1 sector epsilon subunit</fullName>
    </alternativeName>
    <alternativeName>
        <fullName evidence="1">F-ATPase epsilon subunit</fullName>
    </alternativeName>
</protein>
<dbReference type="EMBL" id="CP000090">
    <property type="protein sequence ID" value="AAZ62703.1"/>
    <property type="molecule type" value="Genomic_DNA"/>
</dbReference>
<dbReference type="SMR" id="Q46VY1"/>
<dbReference type="STRING" id="264198.Reut_A3345"/>
<dbReference type="KEGG" id="reu:Reut_A3345"/>
<dbReference type="eggNOG" id="COG0355">
    <property type="taxonomic scope" value="Bacteria"/>
</dbReference>
<dbReference type="HOGENOM" id="CLU_084338_2_0_4"/>
<dbReference type="OrthoDB" id="9791445at2"/>
<dbReference type="GO" id="GO:0005886">
    <property type="term" value="C:plasma membrane"/>
    <property type="evidence" value="ECO:0007669"/>
    <property type="project" value="UniProtKB-SubCell"/>
</dbReference>
<dbReference type="GO" id="GO:0045259">
    <property type="term" value="C:proton-transporting ATP synthase complex"/>
    <property type="evidence" value="ECO:0007669"/>
    <property type="project" value="UniProtKB-KW"/>
</dbReference>
<dbReference type="GO" id="GO:0005524">
    <property type="term" value="F:ATP binding"/>
    <property type="evidence" value="ECO:0007669"/>
    <property type="project" value="UniProtKB-UniRule"/>
</dbReference>
<dbReference type="GO" id="GO:0046933">
    <property type="term" value="F:proton-transporting ATP synthase activity, rotational mechanism"/>
    <property type="evidence" value="ECO:0007669"/>
    <property type="project" value="UniProtKB-UniRule"/>
</dbReference>
<dbReference type="CDD" id="cd12152">
    <property type="entry name" value="F1-ATPase_delta"/>
    <property type="match status" value="1"/>
</dbReference>
<dbReference type="FunFam" id="2.60.15.10:FF:000001">
    <property type="entry name" value="ATP synthase epsilon chain"/>
    <property type="match status" value="1"/>
</dbReference>
<dbReference type="Gene3D" id="1.20.5.440">
    <property type="entry name" value="ATP synthase delta/epsilon subunit, C-terminal domain"/>
    <property type="match status" value="1"/>
</dbReference>
<dbReference type="Gene3D" id="2.60.15.10">
    <property type="entry name" value="F0F1 ATP synthase delta/epsilon subunit, N-terminal"/>
    <property type="match status" value="1"/>
</dbReference>
<dbReference type="HAMAP" id="MF_00530">
    <property type="entry name" value="ATP_synth_epsil_bac"/>
    <property type="match status" value="1"/>
</dbReference>
<dbReference type="InterPro" id="IPR036794">
    <property type="entry name" value="ATP_F1_dsu/esu_C_sf"/>
</dbReference>
<dbReference type="InterPro" id="IPR001469">
    <property type="entry name" value="ATP_synth_F1_dsu/esu"/>
</dbReference>
<dbReference type="InterPro" id="IPR020546">
    <property type="entry name" value="ATP_synth_F1_dsu/esu_N"/>
</dbReference>
<dbReference type="InterPro" id="IPR020547">
    <property type="entry name" value="ATP_synth_F1_esu_C"/>
</dbReference>
<dbReference type="InterPro" id="IPR036771">
    <property type="entry name" value="ATPsynth_dsu/esu_N"/>
</dbReference>
<dbReference type="NCBIfam" id="TIGR01216">
    <property type="entry name" value="ATP_synt_epsi"/>
    <property type="match status" value="1"/>
</dbReference>
<dbReference type="NCBIfam" id="NF001847">
    <property type="entry name" value="PRK00571.1-4"/>
    <property type="match status" value="1"/>
</dbReference>
<dbReference type="PANTHER" id="PTHR13822">
    <property type="entry name" value="ATP SYNTHASE DELTA/EPSILON CHAIN"/>
    <property type="match status" value="1"/>
</dbReference>
<dbReference type="PANTHER" id="PTHR13822:SF10">
    <property type="entry name" value="ATP SYNTHASE EPSILON CHAIN, CHLOROPLASTIC"/>
    <property type="match status" value="1"/>
</dbReference>
<dbReference type="Pfam" id="PF00401">
    <property type="entry name" value="ATP-synt_DE"/>
    <property type="match status" value="1"/>
</dbReference>
<dbReference type="Pfam" id="PF02823">
    <property type="entry name" value="ATP-synt_DE_N"/>
    <property type="match status" value="1"/>
</dbReference>
<dbReference type="SUPFAM" id="SSF46604">
    <property type="entry name" value="Epsilon subunit of F1F0-ATP synthase C-terminal domain"/>
    <property type="match status" value="1"/>
</dbReference>
<dbReference type="SUPFAM" id="SSF51344">
    <property type="entry name" value="Epsilon subunit of F1F0-ATP synthase N-terminal domain"/>
    <property type="match status" value="1"/>
</dbReference>
<feature type="chain" id="PRO_0000265868" description="ATP synthase epsilon chain">
    <location>
        <begin position="1"/>
        <end position="138"/>
    </location>
</feature>
<name>ATPE_CUPPJ</name>
<gene>
    <name evidence="1" type="primary">atpC</name>
    <name type="ordered locus">Reut_A3345</name>
</gene>
<comment type="function">
    <text evidence="1">Produces ATP from ADP in the presence of a proton gradient across the membrane.</text>
</comment>
<comment type="subunit">
    <text>F-type ATPases have 2 components, CF(1) - the catalytic core - and CF(0) - the membrane proton channel. CF(1) has five subunits: alpha(3), beta(3), gamma(1), delta(1), epsilon(1). CF(0) has three main subunits: a, b and c.</text>
</comment>
<comment type="subcellular location">
    <subcellularLocation>
        <location evidence="1">Cell inner membrane</location>
        <topology evidence="1">Peripheral membrane protein</topology>
    </subcellularLocation>
</comment>
<comment type="similarity">
    <text evidence="1">Belongs to the ATPase epsilon chain family.</text>
</comment>
<organism>
    <name type="scientific">Cupriavidus pinatubonensis (strain JMP 134 / LMG 1197)</name>
    <name type="common">Cupriavidus necator (strain JMP 134)</name>
    <dbReference type="NCBI Taxonomy" id="264198"/>
    <lineage>
        <taxon>Bacteria</taxon>
        <taxon>Pseudomonadati</taxon>
        <taxon>Pseudomonadota</taxon>
        <taxon>Betaproteobacteria</taxon>
        <taxon>Burkholderiales</taxon>
        <taxon>Burkholderiaceae</taxon>
        <taxon>Cupriavidus</taxon>
    </lineage>
</organism>
<evidence type="ECO:0000255" key="1">
    <source>
        <dbReference type="HAMAP-Rule" id="MF_00530"/>
    </source>
</evidence>
<sequence>MATILVDVVSAEASIFSGPAKFVALPGESGELGILPGHTPLITRIQPGAVRIEKEDGSEEFVFVAGGILEVQPQHVTVLADTAIRGTDLDEAKAQEAKRAAEELMQNQSSDLDIARAQSELAVAAAQLAAIARLRRKK</sequence>
<reference key="1">
    <citation type="journal article" date="2010" name="PLoS ONE">
        <title>The complete multipartite genome sequence of Cupriavidus necator JMP134, a versatile pollutant degrader.</title>
        <authorList>
            <person name="Lykidis A."/>
            <person name="Perez-Pantoja D."/>
            <person name="Ledger T."/>
            <person name="Mavromatis K."/>
            <person name="Anderson I.J."/>
            <person name="Ivanova N.N."/>
            <person name="Hooper S.D."/>
            <person name="Lapidus A."/>
            <person name="Lucas S."/>
            <person name="Gonzalez B."/>
            <person name="Kyrpides N.C."/>
        </authorList>
    </citation>
    <scope>NUCLEOTIDE SEQUENCE [LARGE SCALE GENOMIC DNA]</scope>
    <source>
        <strain>JMP134 / LMG 1197</strain>
    </source>
</reference>
<proteinExistence type="inferred from homology"/>